<dbReference type="EMBL" id="CP001657">
    <property type="protein sequence ID" value="ACT14236.1"/>
    <property type="molecule type" value="Genomic_DNA"/>
</dbReference>
<dbReference type="RefSeq" id="WP_015841372.1">
    <property type="nucleotide sequence ID" value="NC_012917.1"/>
</dbReference>
<dbReference type="SMR" id="C6DCR1"/>
<dbReference type="STRING" id="561230.PC1_3213"/>
<dbReference type="GeneID" id="67792980"/>
<dbReference type="KEGG" id="pct:PC1_3213"/>
<dbReference type="eggNOG" id="COG0468">
    <property type="taxonomic scope" value="Bacteria"/>
</dbReference>
<dbReference type="HOGENOM" id="CLU_040469_3_2_6"/>
<dbReference type="OrthoDB" id="9776733at2"/>
<dbReference type="Proteomes" id="UP000002736">
    <property type="component" value="Chromosome"/>
</dbReference>
<dbReference type="GO" id="GO:0005829">
    <property type="term" value="C:cytosol"/>
    <property type="evidence" value="ECO:0007669"/>
    <property type="project" value="TreeGrafter"/>
</dbReference>
<dbReference type="GO" id="GO:0005524">
    <property type="term" value="F:ATP binding"/>
    <property type="evidence" value="ECO:0007669"/>
    <property type="project" value="UniProtKB-UniRule"/>
</dbReference>
<dbReference type="GO" id="GO:0016887">
    <property type="term" value="F:ATP hydrolysis activity"/>
    <property type="evidence" value="ECO:0007669"/>
    <property type="project" value="InterPro"/>
</dbReference>
<dbReference type="GO" id="GO:0140664">
    <property type="term" value="F:ATP-dependent DNA damage sensor activity"/>
    <property type="evidence" value="ECO:0007669"/>
    <property type="project" value="InterPro"/>
</dbReference>
<dbReference type="GO" id="GO:0003684">
    <property type="term" value="F:damaged DNA binding"/>
    <property type="evidence" value="ECO:0007669"/>
    <property type="project" value="UniProtKB-UniRule"/>
</dbReference>
<dbReference type="GO" id="GO:0003697">
    <property type="term" value="F:single-stranded DNA binding"/>
    <property type="evidence" value="ECO:0007669"/>
    <property type="project" value="UniProtKB-UniRule"/>
</dbReference>
<dbReference type="GO" id="GO:0006310">
    <property type="term" value="P:DNA recombination"/>
    <property type="evidence" value="ECO:0007669"/>
    <property type="project" value="UniProtKB-UniRule"/>
</dbReference>
<dbReference type="GO" id="GO:0006281">
    <property type="term" value="P:DNA repair"/>
    <property type="evidence" value="ECO:0007669"/>
    <property type="project" value="UniProtKB-UniRule"/>
</dbReference>
<dbReference type="GO" id="GO:0009432">
    <property type="term" value="P:SOS response"/>
    <property type="evidence" value="ECO:0007669"/>
    <property type="project" value="UniProtKB-UniRule"/>
</dbReference>
<dbReference type="CDD" id="cd00983">
    <property type="entry name" value="RecA"/>
    <property type="match status" value="1"/>
</dbReference>
<dbReference type="FunFam" id="3.40.50.300:FF:000087">
    <property type="entry name" value="Recombinase RecA"/>
    <property type="match status" value="1"/>
</dbReference>
<dbReference type="Gene3D" id="3.40.50.300">
    <property type="entry name" value="P-loop containing nucleotide triphosphate hydrolases"/>
    <property type="match status" value="1"/>
</dbReference>
<dbReference type="HAMAP" id="MF_00268">
    <property type="entry name" value="RecA"/>
    <property type="match status" value="1"/>
</dbReference>
<dbReference type="InterPro" id="IPR003593">
    <property type="entry name" value="AAA+_ATPase"/>
</dbReference>
<dbReference type="InterPro" id="IPR013765">
    <property type="entry name" value="DNA_recomb/repair_RecA"/>
</dbReference>
<dbReference type="InterPro" id="IPR020584">
    <property type="entry name" value="DNA_recomb/repair_RecA_CS"/>
</dbReference>
<dbReference type="InterPro" id="IPR027417">
    <property type="entry name" value="P-loop_NTPase"/>
</dbReference>
<dbReference type="InterPro" id="IPR049261">
    <property type="entry name" value="RecA-like_C"/>
</dbReference>
<dbReference type="InterPro" id="IPR049428">
    <property type="entry name" value="RecA-like_N"/>
</dbReference>
<dbReference type="InterPro" id="IPR020588">
    <property type="entry name" value="RecA_ATP-bd"/>
</dbReference>
<dbReference type="InterPro" id="IPR023400">
    <property type="entry name" value="RecA_C_sf"/>
</dbReference>
<dbReference type="InterPro" id="IPR020587">
    <property type="entry name" value="RecA_monomer-monomer_interface"/>
</dbReference>
<dbReference type="NCBIfam" id="TIGR02012">
    <property type="entry name" value="tigrfam_recA"/>
    <property type="match status" value="1"/>
</dbReference>
<dbReference type="PANTHER" id="PTHR45900:SF1">
    <property type="entry name" value="MITOCHONDRIAL DNA REPAIR PROTEIN RECA HOMOLOG-RELATED"/>
    <property type="match status" value="1"/>
</dbReference>
<dbReference type="PANTHER" id="PTHR45900">
    <property type="entry name" value="RECA"/>
    <property type="match status" value="1"/>
</dbReference>
<dbReference type="Pfam" id="PF00154">
    <property type="entry name" value="RecA"/>
    <property type="match status" value="1"/>
</dbReference>
<dbReference type="Pfam" id="PF21096">
    <property type="entry name" value="RecA_C"/>
    <property type="match status" value="1"/>
</dbReference>
<dbReference type="PRINTS" id="PR00142">
    <property type="entry name" value="RECA"/>
</dbReference>
<dbReference type="SMART" id="SM00382">
    <property type="entry name" value="AAA"/>
    <property type="match status" value="1"/>
</dbReference>
<dbReference type="SUPFAM" id="SSF52540">
    <property type="entry name" value="P-loop containing nucleoside triphosphate hydrolases"/>
    <property type="match status" value="1"/>
</dbReference>
<dbReference type="SUPFAM" id="SSF54752">
    <property type="entry name" value="RecA protein, C-terminal domain"/>
    <property type="match status" value="1"/>
</dbReference>
<dbReference type="PROSITE" id="PS00321">
    <property type="entry name" value="RECA_1"/>
    <property type="match status" value="1"/>
</dbReference>
<dbReference type="PROSITE" id="PS50162">
    <property type="entry name" value="RECA_2"/>
    <property type="match status" value="1"/>
</dbReference>
<dbReference type="PROSITE" id="PS50163">
    <property type="entry name" value="RECA_3"/>
    <property type="match status" value="1"/>
</dbReference>
<name>RECA_PECCP</name>
<keyword id="KW-0067">ATP-binding</keyword>
<keyword id="KW-0963">Cytoplasm</keyword>
<keyword id="KW-0227">DNA damage</keyword>
<keyword id="KW-0233">DNA recombination</keyword>
<keyword id="KW-0234">DNA repair</keyword>
<keyword id="KW-0238">DNA-binding</keyword>
<keyword id="KW-0547">Nucleotide-binding</keyword>
<keyword id="KW-0742">SOS response</keyword>
<gene>
    <name evidence="1" type="primary">recA</name>
    <name type="ordered locus">PC1_3213</name>
</gene>
<feature type="chain" id="PRO_1000204711" description="Protein RecA">
    <location>
        <begin position="1"/>
        <end position="357"/>
    </location>
</feature>
<feature type="region of interest" description="Disordered" evidence="2">
    <location>
        <begin position="333"/>
        <end position="357"/>
    </location>
</feature>
<feature type="compositionally biased region" description="Acidic residues" evidence="2">
    <location>
        <begin position="348"/>
        <end position="357"/>
    </location>
</feature>
<feature type="binding site" evidence="1">
    <location>
        <begin position="67"/>
        <end position="74"/>
    </location>
    <ligand>
        <name>ATP</name>
        <dbReference type="ChEBI" id="CHEBI:30616"/>
    </ligand>
</feature>
<evidence type="ECO:0000255" key="1">
    <source>
        <dbReference type="HAMAP-Rule" id="MF_00268"/>
    </source>
</evidence>
<evidence type="ECO:0000256" key="2">
    <source>
        <dbReference type="SAM" id="MobiDB-lite"/>
    </source>
</evidence>
<comment type="function">
    <text evidence="1">Can catalyze the hydrolysis of ATP in the presence of single-stranded DNA, the ATP-dependent uptake of single-stranded DNA by duplex DNA, and the ATP-dependent hybridization of homologous single-stranded DNAs. It interacts with LexA causing its activation and leading to its autocatalytic cleavage.</text>
</comment>
<comment type="subcellular location">
    <subcellularLocation>
        <location evidence="1">Cytoplasm</location>
    </subcellularLocation>
</comment>
<comment type="similarity">
    <text evidence="1">Belongs to the RecA family.</text>
</comment>
<proteinExistence type="inferred from homology"/>
<accession>C6DCR1</accession>
<reference key="1">
    <citation type="submission" date="2009-07" db="EMBL/GenBank/DDBJ databases">
        <title>Complete sequence of Pectobacterium carotovorum subsp. carotovorum PC1.</title>
        <authorList>
            <consortium name="US DOE Joint Genome Institute"/>
            <person name="Lucas S."/>
            <person name="Copeland A."/>
            <person name="Lapidus A."/>
            <person name="Glavina del Rio T."/>
            <person name="Tice H."/>
            <person name="Bruce D."/>
            <person name="Goodwin L."/>
            <person name="Pitluck S."/>
            <person name="Munk A.C."/>
            <person name="Brettin T."/>
            <person name="Detter J.C."/>
            <person name="Han C."/>
            <person name="Tapia R."/>
            <person name="Larimer F."/>
            <person name="Land M."/>
            <person name="Hauser L."/>
            <person name="Kyrpides N."/>
            <person name="Mikhailova N."/>
            <person name="Balakrishnan V."/>
            <person name="Glasner J."/>
            <person name="Perna N.T."/>
        </authorList>
    </citation>
    <scope>NUCLEOTIDE SEQUENCE [LARGE SCALE GENOMIC DNA]</scope>
    <source>
        <strain>PC1</strain>
    </source>
</reference>
<organism>
    <name type="scientific">Pectobacterium carotovorum subsp. carotovorum (strain PC1)</name>
    <dbReference type="NCBI Taxonomy" id="561230"/>
    <lineage>
        <taxon>Bacteria</taxon>
        <taxon>Pseudomonadati</taxon>
        <taxon>Pseudomonadota</taxon>
        <taxon>Gammaproteobacteria</taxon>
        <taxon>Enterobacterales</taxon>
        <taxon>Pectobacteriaceae</taxon>
        <taxon>Pectobacterium</taxon>
    </lineage>
</organism>
<protein>
    <recommendedName>
        <fullName evidence="1">Protein RecA</fullName>
    </recommendedName>
    <alternativeName>
        <fullName evidence="1">Recombinase A</fullName>
    </alternativeName>
</protein>
<sequence length="357" mass="38247">MAIDENKQKALAAALGQIEKQFGKGSIMRLGEDRSMDVETISTGSLSLDIALGAGGLPMGRIVEIYGPESSGKTTLTLQVIAAAQREGKTCAFIDAEHALDPIYAKKLGVDIDNLLCSQPDTGEQALEICDALTRSGAVDVIIVDSVAALTPKAEIEGEIGDSHMGLAARMMSQAMRKLAGNLKQANTLLIFINQIRMKIGVMFGNPETTTGGNALKFYASVRLDIRRTGAIKEGEEVVGSETRVKVVKNKVAAPFKQAEFQILYGEGINIHGELVDLGVKHKLIEKAGAWYSYNGDKIGQGKANACNFLKENPAVAAELDKKLREMLLHKGNELTPATAGNSHDEDAFADEGNEEF</sequence>